<feature type="chain" id="PRO_0000128653" description="Polyphosphate kinase">
    <location>
        <begin position="1"/>
        <end position="727"/>
    </location>
</feature>
<feature type="active site" description="Phosphohistidine intermediate" evidence="1">
    <location>
        <position position="472"/>
    </location>
</feature>
<feature type="binding site" evidence="1">
    <location>
        <position position="82"/>
    </location>
    <ligand>
        <name>ATP</name>
        <dbReference type="ChEBI" id="CHEBI:30616"/>
    </ligand>
</feature>
<feature type="binding site" evidence="1">
    <location>
        <position position="412"/>
    </location>
    <ligand>
        <name>Mg(2+)</name>
        <dbReference type="ChEBI" id="CHEBI:18420"/>
    </ligand>
</feature>
<feature type="binding site" evidence="1">
    <location>
        <position position="442"/>
    </location>
    <ligand>
        <name>Mg(2+)</name>
        <dbReference type="ChEBI" id="CHEBI:18420"/>
    </ligand>
</feature>
<feature type="binding site" evidence="1">
    <location>
        <position position="505"/>
    </location>
    <ligand>
        <name>ATP</name>
        <dbReference type="ChEBI" id="CHEBI:30616"/>
    </ligand>
</feature>
<feature type="binding site" evidence="1">
    <location>
        <position position="601"/>
    </location>
    <ligand>
        <name>ATP</name>
        <dbReference type="ChEBI" id="CHEBI:30616"/>
    </ligand>
</feature>
<feature type="binding site" evidence="1">
    <location>
        <position position="629"/>
    </location>
    <ligand>
        <name>ATP</name>
        <dbReference type="ChEBI" id="CHEBI:30616"/>
    </ligand>
</feature>
<gene>
    <name evidence="1" type="primary">ppk</name>
    <name type="ordered locus">PP_5217</name>
</gene>
<reference key="1">
    <citation type="journal article" date="2002" name="Environ. Microbiol.">
        <title>Complete genome sequence and comparative analysis of the metabolically versatile Pseudomonas putida KT2440.</title>
        <authorList>
            <person name="Nelson K.E."/>
            <person name="Weinel C."/>
            <person name="Paulsen I.T."/>
            <person name="Dodson R.J."/>
            <person name="Hilbert H."/>
            <person name="Martins dos Santos V.A.P."/>
            <person name="Fouts D.E."/>
            <person name="Gill S.R."/>
            <person name="Pop M."/>
            <person name="Holmes M."/>
            <person name="Brinkac L.M."/>
            <person name="Beanan M.J."/>
            <person name="DeBoy R.T."/>
            <person name="Daugherty S.C."/>
            <person name="Kolonay J.F."/>
            <person name="Madupu R."/>
            <person name="Nelson W.C."/>
            <person name="White O."/>
            <person name="Peterson J.D."/>
            <person name="Khouri H.M."/>
            <person name="Hance I."/>
            <person name="Chris Lee P."/>
            <person name="Holtzapple E.K."/>
            <person name="Scanlan D."/>
            <person name="Tran K."/>
            <person name="Moazzez A."/>
            <person name="Utterback T.R."/>
            <person name="Rizzo M."/>
            <person name="Lee K."/>
            <person name="Kosack D."/>
            <person name="Moestl D."/>
            <person name="Wedler H."/>
            <person name="Lauber J."/>
            <person name="Stjepandic D."/>
            <person name="Hoheisel J."/>
            <person name="Straetz M."/>
            <person name="Heim S."/>
            <person name="Kiewitz C."/>
            <person name="Eisen J.A."/>
            <person name="Timmis K.N."/>
            <person name="Duesterhoeft A."/>
            <person name="Tuemmler B."/>
            <person name="Fraser C.M."/>
        </authorList>
    </citation>
    <scope>NUCLEOTIDE SEQUENCE [LARGE SCALE GENOMIC DNA]</scope>
    <source>
        <strain>ATCC 47054 / DSM 6125 / CFBP 8728 / NCIMB 11950 / KT2440</strain>
    </source>
</reference>
<dbReference type="EC" id="2.7.4.1" evidence="1"/>
<dbReference type="EMBL" id="AE015451">
    <property type="protein sequence ID" value="AAN70782.1"/>
    <property type="molecule type" value="Genomic_DNA"/>
</dbReference>
<dbReference type="RefSeq" id="NP_747318.1">
    <property type="nucleotide sequence ID" value="NC_002947.4"/>
</dbReference>
<dbReference type="SMR" id="Q88CG4"/>
<dbReference type="STRING" id="160488.PP_5217"/>
<dbReference type="PaxDb" id="160488-PP_5217"/>
<dbReference type="KEGG" id="ppu:PP_5217"/>
<dbReference type="PATRIC" id="fig|160488.4.peg.5566"/>
<dbReference type="eggNOG" id="COG0855">
    <property type="taxonomic scope" value="Bacteria"/>
</dbReference>
<dbReference type="HOGENOM" id="CLU_009678_5_0_6"/>
<dbReference type="OrthoDB" id="9761456at2"/>
<dbReference type="PhylomeDB" id="Q88CG4"/>
<dbReference type="BioCyc" id="PPUT160488:G1G01-5567-MONOMER"/>
<dbReference type="Proteomes" id="UP000000556">
    <property type="component" value="Chromosome"/>
</dbReference>
<dbReference type="GO" id="GO:0009358">
    <property type="term" value="C:polyphosphate kinase complex"/>
    <property type="evidence" value="ECO:0007669"/>
    <property type="project" value="InterPro"/>
</dbReference>
<dbReference type="GO" id="GO:0005524">
    <property type="term" value="F:ATP binding"/>
    <property type="evidence" value="ECO:0007669"/>
    <property type="project" value="UniProtKB-KW"/>
</dbReference>
<dbReference type="GO" id="GO:0046872">
    <property type="term" value="F:metal ion binding"/>
    <property type="evidence" value="ECO:0007669"/>
    <property type="project" value="UniProtKB-KW"/>
</dbReference>
<dbReference type="GO" id="GO:0008976">
    <property type="term" value="F:polyphosphate kinase activity"/>
    <property type="evidence" value="ECO:0007669"/>
    <property type="project" value="UniProtKB-UniRule"/>
</dbReference>
<dbReference type="GO" id="GO:0006799">
    <property type="term" value="P:polyphosphate biosynthetic process"/>
    <property type="evidence" value="ECO:0007669"/>
    <property type="project" value="UniProtKB-UniRule"/>
</dbReference>
<dbReference type="CDD" id="cd09165">
    <property type="entry name" value="PLDc_PaPPK1_C1_like"/>
    <property type="match status" value="1"/>
</dbReference>
<dbReference type="CDD" id="cd09168">
    <property type="entry name" value="PLDc_PaPPK1_C2_like"/>
    <property type="match status" value="1"/>
</dbReference>
<dbReference type="Gene3D" id="3.30.870.10">
    <property type="entry name" value="Endonuclease Chain A"/>
    <property type="match status" value="2"/>
</dbReference>
<dbReference type="Gene3D" id="3.30.1840.10">
    <property type="entry name" value="Polyphosphate kinase middle domain"/>
    <property type="match status" value="1"/>
</dbReference>
<dbReference type="Gene3D" id="1.20.58.310">
    <property type="entry name" value="Polyphosphate kinase N-terminal domain"/>
    <property type="match status" value="1"/>
</dbReference>
<dbReference type="HAMAP" id="MF_00347">
    <property type="entry name" value="Polyphosphate_kinase"/>
    <property type="match status" value="1"/>
</dbReference>
<dbReference type="InterPro" id="IPR003414">
    <property type="entry name" value="PP_kinase"/>
</dbReference>
<dbReference type="InterPro" id="IPR041108">
    <property type="entry name" value="PP_kinase_C_1"/>
</dbReference>
<dbReference type="InterPro" id="IPR024953">
    <property type="entry name" value="PP_kinase_middle"/>
</dbReference>
<dbReference type="InterPro" id="IPR036830">
    <property type="entry name" value="PP_kinase_middle_dom_sf"/>
</dbReference>
<dbReference type="InterPro" id="IPR025200">
    <property type="entry name" value="PPK_C_dom2"/>
</dbReference>
<dbReference type="InterPro" id="IPR025198">
    <property type="entry name" value="PPK_N_dom"/>
</dbReference>
<dbReference type="InterPro" id="IPR036832">
    <property type="entry name" value="PPK_N_dom_sf"/>
</dbReference>
<dbReference type="NCBIfam" id="TIGR03705">
    <property type="entry name" value="poly_P_kin"/>
    <property type="match status" value="1"/>
</dbReference>
<dbReference type="NCBIfam" id="NF003917">
    <property type="entry name" value="PRK05443.1-1"/>
    <property type="match status" value="1"/>
</dbReference>
<dbReference type="NCBIfam" id="NF003918">
    <property type="entry name" value="PRK05443.1-2"/>
    <property type="match status" value="1"/>
</dbReference>
<dbReference type="NCBIfam" id="NF003921">
    <property type="entry name" value="PRK05443.2-2"/>
    <property type="match status" value="1"/>
</dbReference>
<dbReference type="PANTHER" id="PTHR30218">
    <property type="entry name" value="POLYPHOSPHATE KINASE"/>
    <property type="match status" value="1"/>
</dbReference>
<dbReference type="PANTHER" id="PTHR30218:SF0">
    <property type="entry name" value="POLYPHOSPHATE KINASE"/>
    <property type="match status" value="1"/>
</dbReference>
<dbReference type="Pfam" id="PF02503">
    <property type="entry name" value="PP_kinase"/>
    <property type="match status" value="1"/>
</dbReference>
<dbReference type="Pfam" id="PF13090">
    <property type="entry name" value="PP_kinase_C"/>
    <property type="match status" value="1"/>
</dbReference>
<dbReference type="Pfam" id="PF17941">
    <property type="entry name" value="PP_kinase_C_1"/>
    <property type="match status" value="1"/>
</dbReference>
<dbReference type="Pfam" id="PF13089">
    <property type="entry name" value="PP_kinase_N"/>
    <property type="match status" value="1"/>
</dbReference>
<dbReference type="PIRSF" id="PIRSF015589">
    <property type="entry name" value="PP_kinase"/>
    <property type="match status" value="1"/>
</dbReference>
<dbReference type="SUPFAM" id="SSF56024">
    <property type="entry name" value="Phospholipase D/nuclease"/>
    <property type="match status" value="2"/>
</dbReference>
<dbReference type="SUPFAM" id="SSF143724">
    <property type="entry name" value="PHP14-like"/>
    <property type="match status" value="1"/>
</dbReference>
<dbReference type="SUPFAM" id="SSF140356">
    <property type="entry name" value="PPK N-terminal domain-like"/>
    <property type="match status" value="1"/>
</dbReference>
<protein>
    <recommendedName>
        <fullName evidence="1">Polyphosphate kinase</fullName>
        <ecNumber evidence="1">2.7.4.1</ecNumber>
    </recommendedName>
    <alternativeName>
        <fullName evidence="1">ATP-polyphosphate phosphotransferase</fullName>
    </alternativeName>
    <alternativeName>
        <fullName evidence="1">Polyphosphoric acid kinase</fullName>
    </alternativeName>
</protein>
<sequence length="727" mass="81732">MLQTPPDLPPVAEPVAEQVVEAVAPVPAPSPTIAVPGLDDSSLYIHRELSQLQFNIRVLEQALDENYPLLERLKFLLIFSSNLDEFFEIRVAGLKKQINFAREQAGADGLQPHQALARISELVHIEVERQYAILNDVLLPELEKHQIRFIRRRYWTPKLKTWVRRYFRDEIAPIITPIGLDPTHPFPLLVNKSLNFIVELEGVDAFGRDSGLAIIPAPRLLPRVIRVPEEVGGPGANYVFLSSMIHAHADDLFQGMKVKGCYQFRLTRNADLALDSEEVDDLARALRGELFSRRYGDAVRLEVADTCPKHLSDYLLKQFSLSESELYQVNGPVNLTRLFSITGLDSHPELQYTPFTPAIPKLLANADNIFSVISKQDILLMHPFESFTPVVDLLRQAAKDPHVLAVRQTLYRSGANSEIVDALVDAARNGKEVTAVIELRARFDEESNLQMASRLQAAGAVVIYGVVGFKTHAKMMLILRREQGEIVRYAHLGTGNYHAGNARLYTDYSLLTSDDALTEDVGKLFSQLIGMGKTLRMKKLLHAPFTLKKGMLDMIARETQFALEGKPAHIIAKFNSLTDAKVIKALYKASQSGVKIDLVVRGMCCLRPGIPGVSHNIQVRSIIGRFLEHTRVFYFLNGGEEQIYLSSADWMERNLDKRVETCFPVEGKKLLLRVKKELEGYLTDNTHAWTLQPDGRYVRSTPTGNQNPRSVQATLLERLSNPVLNVR</sequence>
<name>PPK1_PSEPK</name>
<comment type="function">
    <text evidence="1">Catalyzes the reversible transfer of the terminal phosphate of ATP to form a long-chain polyphosphate (polyP).</text>
</comment>
<comment type="catalytic activity">
    <reaction evidence="1">
        <text>[phosphate](n) + ATP = [phosphate](n+1) + ADP</text>
        <dbReference type="Rhea" id="RHEA:19573"/>
        <dbReference type="Rhea" id="RHEA-COMP:9859"/>
        <dbReference type="Rhea" id="RHEA-COMP:14280"/>
        <dbReference type="ChEBI" id="CHEBI:16838"/>
        <dbReference type="ChEBI" id="CHEBI:30616"/>
        <dbReference type="ChEBI" id="CHEBI:456216"/>
        <dbReference type="EC" id="2.7.4.1"/>
    </reaction>
</comment>
<comment type="cofactor">
    <cofactor evidence="1">
        <name>Mg(2+)</name>
        <dbReference type="ChEBI" id="CHEBI:18420"/>
    </cofactor>
</comment>
<comment type="PTM">
    <text evidence="1">An intermediate of this reaction is the autophosphorylated ppk in which a phosphate is covalently linked to a histidine residue through a N-P bond.</text>
</comment>
<comment type="similarity">
    <text evidence="1">Belongs to the polyphosphate kinase 1 (PPK1) family.</text>
</comment>
<accession>Q88CG4</accession>
<evidence type="ECO:0000255" key="1">
    <source>
        <dbReference type="HAMAP-Rule" id="MF_00347"/>
    </source>
</evidence>
<organism>
    <name type="scientific">Pseudomonas putida (strain ATCC 47054 / DSM 6125 / CFBP 8728 / NCIMB 11950 / KT2440)</name>
    <dbReference type="NCBI Taxonomy" id="160488"/>
    <lineage>
        <taxon>Bacteria</taxon>
        <taxon>Pseudomonadati</taxon>
        <taxon>Pseudomonadota</taxon>
        <taxon>Gammaproteobacteria</taxon>
        <taxon>Pseudomonadales</taxon>
        <taxon>Pseudomonadaceae</taxon>
        <taxon>Pseudomonas</taxon>
    </lineage>
</organism>
<proteinExistence type="inferred from homology"/>
<keyword id="KW-0067">ATP-binding</keyword>
<keyword id="KW-0418">Kinase</keyword>
<keyword id="KW-0460">Magnesium</keyword>
<keyword id="KW-0479">Metal-binding</keyword>
<keyword id="KW-0547">Nucleotide-binding</keyword>
<keyword id="KW-0597">Phosphoprotein</keyword>
<keyword id="KW-1185">Reference proteome</keyword>
<keyword id="KW-0808">Transferase</keyword>